<accession>Q896M5</accession>
<proteinExistence type="inferred from homology"/>
<dbReference type="EC" id="6.1.1.17" evidence="1"/>
<dbReference type="EMBL" id="AE015927">
    <property type="protein sequence ID" value="AAO35565.1"/>
    <property type="status" value="ALT_INIT"/>
    <property type="molecule type" value="Genomic_DNA"/>
</dbReference>
<dbReference type="RefSeq" id="WP_035125348.1">
    <property type="nucleotide sequence ID" value="NC_004557.1"/>
</dbReference>
<dbReference type="SMR" id="Q896M5"/>
<dbReference type="STRING" id="212717.CTC_00977"/>
<dbReference type="GeneID" id="24252851"/>
<dbReference type="KEGG" id="ctc:CTC_00977"/>
<dbReference type="HOGENOM" id="CLU_015768_6_3_9"/>
<dbReference type="OrthoDB" id="9807503at2"/>
<dbReference type="Proteomes" id="UP000001412">
    <property type="component" value="Chromosome"/>
</dbReference>
<dbReference type="GO" id="GO:0005829">
    <property type="term" value="C:cytosol"/>
    <property type="evidence" value="ECO:0007669"/>
    <property type="project" value="TreeGrafter"/>
</dbReference>
<dbReference type="GO" id="GO:0005524">
    <property type="term" value="F:ATP binding"/>
    <property type="evidence" value="ECO:0007669"/>
    <property type="project" value="UniProtKB-UniRule"/>
</dbReference>
<dbReference type="GO" id="GO:0004818">
    <property type="term" value="F:glutamate-tRNA ligase activity"/>
    <property type="evidence" value="ECO:0007669"/>
    <property type="project" value="UniProtKB-UniRule"/>
</dbReference>
<dbReference type="GO" id="GO:0000049">
    <property type="term" value="F:tRNA binding"/>
    <property type="evidence" value="ECO:0007669"/>
    <property type="project" value="InterPro"/>
</dbReference>
<dbReference type="GO" id="GO:0008270">
    <property type="term" value="F:zinc ion binding"/>
    <property type="evidence" value="ECO:0007669"/>
    <property type="project" value="UniProtKB-UniRule"/>
</dbReference>
<dbReference type="GO" id="GO:0006424">
    <property type="term" value="P:glutamyl-tRNA aminoacylation"/>
    <property type="evidence" value="ECO:0007669"/>
    <property type="project" value="UniProtKB-UniRule"/>
</dbReference>
<dbReference type="CDD" id="cd00808">
    <property type="entry name" value="GluRS_core"/>
    <property type="match status" value="1"/>
</dbReference>
<dbReference type="FunFam" id="3.40.50.620:FF:000045">
    <property type="entry name" value="Glutamate--tRNA ligase, mitochondrial"/>
    <property type="match status" value="1"/>
</dbReference>
<dbReference type="Gene3D" id="1.10.10.350">
    <property type="match status" value="1"/>
</dbReference>
<dbReference type="Gene3D" id="3.40.50.620">
    <property type="entry name" value="HUPs"/>
    <property type="match status" value="1"/>
</dbReference>
<dbReference type="HAMAP" id="MF_00022">
    <property type="entry name" value="Glu_tRNA_synth_type1"/>
    <property type="match status" value="1"/>
</dbReference>
<dbReference type="InterPro" id="IPR045462">
    <property type="entry name" value="aa-tRNA-synth_I_cd-bd"/>
</dbReference>
<dbReference type="InterPro" id="IPR020751">
    <property type="entry name" value="aa-tRNA-synth_I_codon-bd_sub2"/>
</dbReference>
<dbReference type="InterPro" id="IPR001412">
    <property type="entry name" value="aa-tRNA-synth_I_CS"/>
</dbReference>
<dbReference type="InterPro" id="IPR008925">
    <property type="entry name" value="aa_tRNA-synth_I_cd-bd_sf"/>
</dbReference>
<dbReference type="InterPro" id="IPR004527">
    <property type="entry name" value="Glu-tRNA-ligase_bac/mito"/>
</dbReference>
<dbReference type="InterPro" id="IPR000924">
    <property type="entry name" value="Glu/Gln-tRNA-synth"/>
</dbReference>
<dbReference type="InterPro" id="IPR020058">
    <property type="entry name" value="Glu/Gln-tRNA-synth_Ib_cat-dom"/>
</dbReference>
<dbReference type="InterPro" id="IPR049940">
    <property type="entry name" value="GluQ/Sye"/>
</dbReference>
<dbReference type="InterPro" id="IPR033910">
    <property type="entry name" value="GluRS_core"/>
</dbReference>
<dbReference type="InterPro" id="IPR014729">
    <property type="entry name" value="Rossmann-like_a/b/a_fold"/>
</dbReference>
<dbReference type="NCBIfam" id="TIGR00464">
    <property type="entry name" value="gltX_bact"/>
    <property type="match status" value="1"/>
</dbReference>
<dbReference type="PANTHER" id="PTHR43311">
    <property type="entry name" value="GLUTAMATE--TRNA LIGASE"/>
    <property type="match status" value="1"/>
</dbReference>
<dbReference type="PANTHER" id="PTHR43311:SF2">
    <property type="entry name" value="GLUTAMATE--TRNA LIGASE, MITOCHONDRIAL-RELATED"/>
    <property type="match status" value="1"/>
</dbReference>
<dbReference type="Pfam" id="PF19269">
    <property type="entry name" value="Anticodon_2"/>
    <property type="match status" value="1"/>
</dbReference>
<dbReference type="Pfam" id="PF00749">
    <property type="entry name" value="tRNA-synt_1c"/>
    <property type="match status" value="1"/>
</dbReference>
<dbReference type="PRINTS" id="PR00987">
    <property type="entry name" value="TRNASYNTHGLU"/>
</dbReference>
<dbReference type="SUPFAM" id="SSF48163">
    <property type="entry name" value="An anticodon-binding domain of class I aminoacyl-tRNA synthetases"/>
    <property type="match status" value="1"/>
</dbReference>
<dbReference type="SUPFAM" id="SSF52374">
    <property type="entry name" value="Nucleotidylyl transferase"/>
    <property type="match status" value="1"/>
</dbReference>
<dbReference type="PROSITE" id="PS00178">
    <property type="entry name" value="AA_TRNA_LIGASE_I"/>
    <property type="match status" value="1"/>
</dbReference>
<keyword id="KW-0030">Aminoacyl-tRNA synthetase</keyword>
<keyword id="KW-0067">ATP-binding</keyword>
<keyword id="KW-0963">Cytoplasm</keyword>
<keyword id="KW-0436">Ligase</keyword>
<keyword id="KW-0479">Metal-binding</keyword>
<keyword id="KW-0547">Nucleotide-binding</keyword>
<keyword id="KW-0648">Protein biosynthesis</keyword>
<keyword id="KW-1185">Reference proteome</keyword>
<keyword id="KW-0862">Zinc</keyword>
<sequence>MNGNKIRTRFAPSPTGYMHVGNLRTALYAYLIAKHENGDFLLRIEDTDQERQVEGALDIIYNTLKMTGIHHDEGPDIGGPVGPYVQSERKHIYTEYAQKLIDKGEAYYCFCTKERLDMLRENSESLGRPHKYDKHCSHLSKEEIEENLKAGIPFVIRQNNPNKGTTYFEDEIFGKITVDNSELDDMVLIKSDGFPTYNFANVVDDHLMGITHVVRGSEYLSSSPKYNRLYDAFGWDVPKYIHCPPIMKDSHSKLSKRNGDASFQDLLEKGYLKDAILNYIALLGWNPGTTEEIFSLEDLIGKFDYKSINKAPAIFDNKKLKWMNGEYIRMFSLEEFHKLALPYYKGVITKDFDLLKISELLHTRTELLSEIPEQVDFFDELPEYSCDLYVHKKMKTNFENSLESLEKALPVLESIDNWNTETIHDSIMELIKELEVKNGIVLWPIRTAVSGKKFTPGGAFEIAEILGKEETLKRVKIGIEKLKNEINQ</sequence>
<evidence type="ECO:0000255" key="1">
    <source>
        <dbReference type="HAMAP-Rule" id="MF_00022"/>
    </source>
</evidence>
<evidence type="ECO:0000305" key="2"/>
<protein>
    <recommendedName>
        <fullName evidence="1">Glutamate--tRNA ligase</fullName>
        <ecNumber evidence="1">6.1.1.17</ecNumber>
    </recommendedName>
    <alternativeName>
        <fullName evidence="1">Glutamyl-tRNA synthetase</fullName>
        <shortName evidence="1">GluRS</shortName>
    </alternativeName>
</protein>
<reference key="1">
    <citation type="journal article" date="2003" name="Proc. Natl. Acad. Sci. U.S.A.">
        <title>The genome sequence of Clostridium tetani, the causative agent of tetanus disease.</title>
        <authorList>
            <person name="Brueggemann H."/>
            <person name="Baeumer S."/>
            <person name="Fricke W.F."/>
            <person name="Wiezer A."/>
            <person name="Liesegang H."/>
            <person name="Decker I."/>
            <person name="Herzberg C."/>
            <person name="Martinez-Arias R."/>
            <person name="Merkl R."/>
            <person name="Henne A."/>
            <person name="Gottschalk G."/>
        </authorList>
    </citation>
    <scope>NUCLEOTIDE SEQUENCE [LARGE SCALE GENOMIC DNA]</scope>
    <source>
        <strain>Massachusetts / E88</strain>
    </source>
</reference>
<name>SYE_CLOTE</name>
<comment type="function">
    <text evidence="1">Catalyzes the attachment of glutamate to tRNA(Glu) in a two-step reaction: glutamate is first activated by ATP to form Glu-AMP and then transferred to the acceptor end of tRNA(Glu).</text>
</comment>
<comment type="catalytic activity">
    <reaction evidence="1">
        <text>tRNA(Glu) + L-glutamate + ATP = L-glutamyl-tRNA(Glu) + AMP + diphosphate</text>
        <dbReference type="Rhea" id="RHEA:23540"/>
        <dbReference type="Rhea" id="RHEA-COMP:9663"/>
        <dbReference type="Rhea" id="RHEA-COMP:9680"/>
        <dbReference type="ChEBI" id="CHEBI:29985"/>
        <dbReference type="ChEBI" id="CHEBI:30616"/>
        <dbReference type="ChEBI" id="CHEBI:33019"/>
        <dbReference type="ChEBI" id="CHEBI:78442"/>
        <dbReference type="ChEBI" id="CHEBI:78520"/>
        <dbReference type="ChEBI" id="CHEBI:456215"/>
        <dbReference type="EC" id="6.1.1.17"/>
    </reaction>
</comment>
<comment type="cofactor">
    <cofactor evidence="1">
        <name>Zn(2+)</name>
        <dbReference type="ChEBI" id="CHEBI:29105"/>
    </cofactor>
    <text evidence="1">Binds 1 zinc ion per subunit.</text>
</comment>
<comment type="subunit">
    <text evidence="1">Monomer.</text>
</comment>
<comment type="subcellular location">
    <subcellularLocation>
        <location evidence="1">Cytoplasm</location>
    </subcellularLocation>
</comment>
<comment type="similarity">
    <text evidence="1">Belongs to the class-I aminoacyl-tRNA synthetase family. Glutamate--tRNA ligase type 1 subfamily.</text>
</comment>
<comment type="sequence caution" evidence="2">
    <conflict type="erroneous initiation">
        <sequence resource="EMBL-CDS" id="AAO35565"/>
    </conflict>
</comment>
<gene>
    <name evidence="1" type="primary">gltX</name>
    <name type="ordered locus">CTC_00977</name>
</gene>
<organism>
    <name type="scientific">Clostridium tetani (strain Massachusetts / E88)</name>
    <dbReference type="NCBI Taxonomy" id="212717"/>
    <lineage>
        <taxon>Bacteria</taxon>
        <taxon>Bacillati</taxon>
        <taxon>Bacillota</taxon>
        <taxon>Clostridia</taxon>
        <taxon>Eubacteriales</taxon>
        <taxon>Clostridiaceae</taxon>
        <taxon>Clostridium</taxon>
    </lineage>
</organism>
<feature type="chain" id="PRO_0000119546" description="Glutamate--tRNA ligase">
    <location>
        <begin position="1"/>
        <end position="488"/>
    </location>
</feature>
<feature type="short sequence motif" description="'HIGH' region" evidence="1">
    <location>
        <begin position="12"/>
        <end position="22"/>
    </location>
</feature>
<feature type="short sequence motif" description="'KMSKS' region" evidence="1">
    <location>
        <begin position="253"/>
        <end position="257"/>
    </location>
</feature>
<feature type="binding site" evidence="1">
    <location>
        <position position="109"/>
    </location>
    <ligand>
        <name>Zn(2+)</name>
        <dbReference type="ChEBI" id="CHEBI:29105"/>
    </ligand>
</feature>
<feature type="binding site" evidence="1">
    <location>
        <position position="111"/>
    </location>
    <ligand>
        <name>Zn(2+)</name>
        <dbReference type="ChEBI" id="CHEBI:29105"/>
    </ligand>
</feature>
<feature type="binding site" evidence="1">
    <location>
        <position position="136"/>
    </location>
    <ligand>
        <name>Zn(2+)</name>
        <dbReference type="ChEBI" id="CHEBI:29105"/>
    </ligand>
</feature>
<feature type="binding site" evidence="1">
    <location>
        <position position="138"/>
    </location>
    <ligand>
        <name>Zn(2+)</name>
        <dbReference type="ChEBI" id="CHEBI:29105"/>
    </ligand>
</feature>
<feature type="binding site" evidence="1">
    <location>
        <position position="256"/>
    </location>
    <ligand>
        <name>ATP</name>
        <dbReference type="ChEBI" id="CHEBI:30616"/>
    </ligand>
</feature>